<sequence>MYDNLKSLGITNPEEIDRYSLRQEANNDILKIYFQKDKGEFFAKSVKFKYPRQRKTVVADGVGQGYKEVQEISPNLRYIIDELDQICQRDRSEVDLKRKILDDLRHLESVVTNKISEIEADLEKLTRK</sequence>
<feature type="chain" id="PRO_1000198443" description="UPF0325 protein YaeH">
    <location>
        <begin position="1"/>
        <end position="128"/>
    </location>
</feature>
<keyword id="KW-1185">Reference proteome</keyword>
<accession>B2U306</accession>
<proteinExistence type="inferred from homology"/>
<dbReference type="EMBL" id="CP001063">
    <property type="protein sequence ID" value="ACD07029.1"/>
    <property type="molecule type" value="Genomic_DNA"/>
</dbReference>
<dbReference type="RefSeq" id="WP_000272188.1">
    <property type="nucleotide sequence ID" value="NC_010658.1"/>
</dbReference>
<dbReference type="SMR" id="B2U306"/>
<dbReference type="STRING" id="344609.SbBS512_E0156"/>
<dbReference type="KEGG" id="sbc:SbBS512_E0156"/>
<dbReference type="HOGENOM" id="CLU_136774_0_0_6"/>
<dbReference type="Proteomes" id="UP000001030">
    <property type="component" value="Chromosome"/>
</dbReference>
<dbReference type="HAMAP" id="MF_01519">
    <property type="entry name" value="UPF0325"/>
    <property type="match status" value="1"/>
</dbReference>
<dbReference type="InterPro" id="IPR020911">
    <property type="entry name" value="UPF0325"/>
</dbReference>
<dbReference type="NCBIfam" id="NF010213">
    <property type="entry name" value="PRK13677.1"/>
    <property type="match status" value="1"/>
</dbReference>
<dbReference type="Pfam" id="PF11944">
    <property type="entry name" value="DUF3461"/>
    <property type="match status" value="1"/>
</dbReference>
<reference key="1">
    <citation type="submission" date="2008-05" db="EMBL/GenBank/DDBJ databases">
        <title>Complete sequence of Shigella boydii serotype 18 strain BS512.</title>
        <authorList>
            <person name="Rasko D.A."/>
            <person name="Rosovitz M."/>
            <person name="Maurelli A.T."/>
            <person name="Myers G."/>
            <person name="Seshadri R."/>
            <person name="Cer R."/>
            <person name="Jiang L."/>
            <person name="Ravel J."/>
            <person name="Sebastian Y."/>
        </authorList>
    </citation>
    <scope>NUCLEOTIDE SEQUENCE [LARGE SCALE GENOMIC DNA]</scope>
    <source>
        <strain>CDC 3083-94 / BS512</strain>
    </source>
</reference>
<protein>
    <recommendedName>
        <fullName evidence="1">UPF0325 protein YaeH</fullName>
    </recommendedName>
</protein>
<gene>
    <name evidence="1" type="primary">yaeH</name>
    <name type="ordered locus">SbBS512_E0156</name>
</gene>
<name>YAEH_SHIB3</name>
<comment type="similarity">
    <text evidence="1">Belongs to the UPF0325 family.</text>
</comment>
<evidence type="ECO:0000255" key="1">
    <source>
        <dbReference type="HAMAP-Rule" id="MF_01519"/>
    </source>
</evidence>
<organism>
    <name type="scientific">Shigella boydii serotype 18 (strain CDC 3083-94 / BS512)</name>
    <dbReference type="NCBI Taxonomy" id="344609"/>
    <lineage>
        <taxon>Bacteria</taxon>
        <taxon>Pseudomonadati</taxon>
        <taxon>Pseudomonadota</taxon>
        <taxon>Gammaproteobacteria</taxon>
        <taxon>Enterobacterales</taxon>
        <taxon>Enterobacteriaceae</taxon>
        <taxon>Shigella</taxon>
    </lineage>
</organism>